<comment type="function">
    <text>Absolutely required for transposition of IS1.</text>
</comment>
<comment type="miscellaneous">
    <text>IS1-D is an iso-insertion sequence of IS1.</text>
</comment>
<comment type="similarity">
    <text evidence="1">Belongs to the IS1 elements InsA family.</text>
</comment>
<protein>
    <recommendedName>
        <fullName>Insertion element iso-IS1d protein InsA</fullName>
    </recommendedName>
</protein>
<dbReference type="EMBL" id="J01731">
    <property type="protein sequence ID" value="AAA96230.1"/>
    <property type="molecule type" value="Genomic_DNA"/>
</dbReference>
<dbReference type="PIR" id="B04602">
    <property type="entry name" value="IEEBB1"/>
</dbReference>
<dbReference type="RefSeq" id="WP_001352790.1">
    <property type="nucleotide sequence ID" value="NZ_UAUQ01000013.1"/>
</dbReference>
<dbReference type="OMA" id="HCKSEDL"/>
<dbReference type="GO" id="GO:0006313">
    <property type="term" value="P:DNA transposition"/>
    <property type="evidence" value="ECO:0007669"/>
    <property type="project" value="InterPro"/>
</dbReference>
<dbReference type="InterPro" id="IPR009057">
    <property type="entry name" value="Homeodomain-like_sf"/>
</dbReference>
<dbReference type="InterPro" id="IPR024431">
    <property type="entry name" value="InsA_HTH_dom"/>
</dbReference>
<dbReference type="InterPro" id="IPR003220">
    <property type="entry name" value="InsA_N_dom_Znf"/>
</dbReference>
<dbReference type="InterPro" id="IPR051252">
    <property type="entry name" value="IS1_transposase_InsA"/>
</dbReference>
<dbReference type="PANTHER" id="PTHR47923">
    <property type="entry name" value="INSERTION ELEMENT IS1 1 PROTEIN INSA-RELATED"/>
    <property type="match status" value="1"/>
</dbReference>
<dbReference type="PANTHER" id="PTHR47923:SF1">
    <property type="entry name" value="INSERTION ELEMENT IS1 1 PROTEIN INSA-RELATED"/>
    <property type="match status" value="1"/>
</dbReference>
<dbReference type="Pfam" id="PF12759">
    <property type="entry name" value="HTH_Tnp_IS1"/>
    <property type="match status" value="1"/>
</dbReference>
<dbReference type="Pfam" id="PF03811">
    <property type="entry name" value="Zn_ribbon_InsA"/>
    <property type="match status" value="1"/>
</dbReference>
<dbReference type="SUPFAM" id="SSF46689">
    <property type="entry name" value="Homeodomain-like"/>
    <property type="match status" value="1"/>
</dbReference>
<name>INA1_SHIDY</name>
<reference key="1">
    <citation type="journal article" date="1981" name="Nature">
        <title>Multiple copies of iso-insertion sequences of IS1 in Shigella dysenteriae chromosome.</title>
        <authorList>
            <person name="Ohtsubo H."/>
            <person name="Nyman K."/>
            <person name="Doroszkiewicz W."/>
            <person name="Ohtsubo E."/>
        </authorList>
    </citation>
    <scope>NUCLEOTIDE SEQUENCE [GENOMIC DNA]</scope>
</reference>
<keyword id="KW-0233">DNA recombination</keyword>
<keyword id="KW-0814">Transposable element</keyword>
<keyword id="KW-0815">Transposition</keyword>
<accession>P03828</accession>
<sequence length="91" mass="9898">MASVSISCPSCSATDGVVRNGKSTAGHQRYLCSHCRKTWQLQFTYTASQPGTHQKIIDMAMNGVGCRATARIMGVSLNTILRHLKNSGRSR</sequence>
<evidence type="ECO:0000305" key="1"/>
<gene>
    <name type="primary">insA</name>
</gene>
<organism>
    <name type="scientific">Shigella dysenteriae</name>
    <dbReference type="NCBI Taxonomy" id="622"/>
    <lineage>
        <taxon>Bacteria</taxon>
        <taxon>Pseudomonadati</taxon>
        <taxon>Pseudomonadota</taxon>
        <taxon>Gammaproteobacteria</taxon>
        <taxon>Enterobacterales</taxon>
        <taxon>Enterobacteriaceae</taxon>
        <taxon>Shigella</taxon>
    </lineage>
</organism>
<proteinExistence type="inferred from homology"/>
<feature type="chain" id="PRO_0000075398" description="Insertion element iso-IS1d protein InsA">
    <location>
        <begin position="1"/>
        <end position="91"/>
    </location>
</feature>